<feature type="peptide" id="PRO_0000345114" description="Conotoxin Ca15a">
    <location>
        <begin position="1"/>
        <end position="35" status="greater than"/>
    </location>
</feature>
<feature type="modified residue" description="4-hydroxyproline" evidence="2">
    <location>
        <position position="8"/>
    </location>
</feature>
<feature type="sequence conflict" description="In Ref. 1; AA sequence." evidence="3" ref="1">
    <original>R</original>
    <variation>N</variation>
    <location>
        <position position="17"/>
    </location>
</feature>
<feature type="sequence conflict" description="In Ref. 1; AA sequence." evidence="3" ref="1">
    <location>
        <position position="21"/>
    </location>
</feature>
<feature type="sequence conflict" description="In Ref. 1; AA sequence." evidence="3" ref="1">
    <original>TRPL</original>
    <variation>GNPK</variation>
    <location>
        <begin position="25"/>
        <end position="28"/>
    </location>
</feature>
<feature type="non-terminal residue">
    <location>
        <position position="35"/>
    </location>
</feature>
<reference key="1">
    <citation type="journal article" date="2008" name="Peptides">
        <title>Identification of a novel class of conotoxins defined as V-conotoxins with a unique cysteine pattern and signal peptide sequence.</title>
        <authorList>
            <person name="Peng C."/>
            <person name="Liu L."/>
            <person name="Shao X.X."/>
            <person name="Chi C.-W."/>
            <person name="Wang C.G."/>
        </authorList>
    </citation>
    <scope>PROTEIN SEQUENCE OF 1-30</scope>
    <scope>HYDROXYLATION AT PRO-8</scope>
    <source>
        <tissue>Venom</tissue>
    </source>
</reference>
<reference key="2">
    <citation type="submission" date="2008-03" db="EMBL/GenBank/DDBJ databases">
        <title>New V-superfamily conotoxin Ca15a from Conus caracteristicus.</title>
        <authorList>
            <person name="Liu L."/>
            <person name="Wu X.C."/>
            <person name="Wang C.G."/>
            <person name="Chi C.-W."/>
        </authorList>
    </citation>
    <scope>NUCLEOTIDE SEQUENCE [MRNA] OF 6-35</scope>
    <source>
        <tissue>Venom duct</tissue>
    </source>
</reference>
<comment type="subcellular location">
    <subcellularLocation>
        <location>Secreted</location>
    </subcellularLocation>
</comment>
<comment type="tissue specificity">
    <text>Expressed by the venom duct.</text>
</comment>
<comment type="domain">
    <text>The cysteine framework is XV (C-C-CC-C-C-C-C).</text>
</comment>
<comment type="PTM">
    <text evidence="1">Contains 4 disulfide bonds.</text>
</comment>
<keyword id="KW-0903">Direct protein sequencing</keyword>
<keyword id="KW-1015">Disulfide bond</keyword>
<keyword id="KW-0379">Hydroxylation</keyword>
<keyword id="KW-0964">Secreted</keyword>
<keyword id="KW-0800">Toxin</keyword>
<evidence type="ECO:0000250" key="1"/>
<evidence type="ECO:0000269" key="2">
    <source>
    </source>
</evidence>
<evidence type="ECO:0000305" key="3"/>
<organism>
    <name type="scientific">Conus caracteristicus</name>
    <name type="common">Characteristic cone</name>
    <dbReference type="NCBI Taxonomy" id="89440"/>
    <lineage>
        <taxon>Eukaryota</taxon>
        <taxon>Metazoa</taxon>
        <taxon>Spiralia</taxon>
        <taxon>Lophotrochozoa</taxon>
        <taxon>Mollusca</taxon>
        <taxon>Gastropoda</taxon>
        <taxon>Caenogastropoda</taxon>
        <taxon>Neogastropoda</taxon>
        <taxon>Conoidea</taxon>
        <taxon>Conidae</taxon>
        <taxon>Conus</taxon>
    </lineage>
</organism>
<name>CTFA_CONCB</name>
<dbReference type="EMBL" id="EU547208">
    <property type="protein sequence ID" value="ACB38369.1"/>
    <property type="molecule type" value="mRNA"/>
</dbReference>
<dbReference type="ConoServer" id="2825">
    <property type="toxin name" value="Ca15a"/>
</dbReference>
<dbReference type="GO" id="GO:0005576">
    <property type="term" value="C:extracellular region"/>
    <property type="evidence" value="ECO:0007669"/>
    <property type="project" value="UniProtKB-SubCell"/>
</dbReference>
<dbReference type="GO" id="GO:0090729">
    <property type="term" value="F:toxin activity"/>
    <property type="evidence" value="ECO:0007669"/>
    <property type="project" value="UniProtKB-KW"/>
</dbReference>
<accession>B2CS62</accession>
<proteinExistence type="evidence at protein level"/>
<protein>
    <recommendedName>
        <fullName>Conotoxin Ca15a</fullName>
    </recommendedName>
</protein>
<sequence>CRVENKCPHTVCCDRSRCSCKLIRTRPLMYHVCVC</sequence>